<comment type="function">
    <text evidence="3">Catalyzes the cleavage of N-acetylneuraminic acid (sialic acid) to form pyruvate and N-acetylmannosamine via a Schiff base intermediate. It prevents sialic acids from being recycled and returning to the cell surface. Involved in the N-glycolylneuraminic acid (Neu5Gc) degradation pathway.</text>
</comment>
<comment type="catalytic activity">
    <reaction evidence="3">
        <text>aceneuramate = aldehydo-N-acetyl-D-mannosamine + pyruvate</text>
        <dbReference type="Rhea" id="RHEA:23296"/>
        <dbReference type="ChEBI" id="CHEBI:15361"/>
        <dbReference type="ChEBI" id="CHEBI:17122"/>
        <dbReference type="ChEBI" id="CHEBI:173083"/>
        <dbReference type="EC" id="4.1.3.3"/>
    </reaction>
</comment>
<comment type="pathway">
    <text evidence="3">Amino-sugar metabolism; N-acetylneuraminate degradation.</text>
</comment>
<comment type="subunit">
    <text evidence="3">Homotetramer.</text>
</comment>
<comment type="subcellular location">
    <subcellularLocation>
        <location evidence="1">Cytoplasm</location>
    </subcellularLocation>
</comment>
<comment type="alternative products">
    <event type="alternative splicing"/>
    <isoform>
        <id>Q5RDY1-1</id>
        <name>1</name>
        <sequence type="displayed"/>
    </isoform>
    <isoform>
        <id>Q5RDY1-2</id>
        <name>2</name>
        <sequence type="described" ref="VSP_022523"/>
    </isoform>
</comment>
<comment type="similarity">
    <text evidence="5">Belongs to the DapA family. NanA subfamily.</text>
</comment>
<reference key="1">
    <citation type="submission" date="2004-11" db="EMBL/GenBank/DDBJ databases">
        <authorList>
            <consortium name="The German cDNA consortium"/>
        </authorList>
    </citation>
    <scope>NUCLEOTIDE SEQUENCE [LARGE SCALE MRNA] (ISOFORMS 1 AND 2)</scope>
    <source>
        <tissue>Kidney</tissue>
    </source>
</reference>
<protein>
    <recommendedName>
        <fullName evidence="3">N-acetylneuraminate lyase</fullName>
        <shortName>NALase</shortName>
        <ecNumber evidence="3">4.1.3.3</ecNumber>
    </recommendedName>
    <alternativeName>
        <fullName>N-acetylneuraminate pyruvate-lyase</fullName>
    </alternativeName>
    <alternativeName>
        <fullName>N-acetylneuraminic acid aldolase</fullName>
    </alternativeName>
    <alternativeName>
        <fullName>Sialate lyase</fullName>
    </alternativeName>
    <alternativeName>
        <fullName>Sialate-pyruvate lyase</fullName>
    </alternativeName>
    <alternativeName>
        <fullName>Sialic acid aldolase</fullName>
    </alternativeName>
    <alternativeName>
        <fullName>Sialic acid lyase</fullName>
    </alternativeName>
</protein>
<name>NPL_PONAB</name>
<gene>
    <name evidence="3" type="primary">NPL</name>
</gene>
<accession>Q5RDY1</accession>
<accession>Q5RFA4</accession>
<sequence>MAFPKKKLQGLVAATITPMTEDGEINFSVIGQYVDYLVKEQGVKNIFVNGTTGEGLSLSISERRQVAEEWVTKGKDKLDQVIIHVGALSLKESQELAQHAAEIGADGIAVIAPFFLKPWTKDILINFLKEVAAAAPALPFYYYHIPALTGVKIRAEELLDGILDKIPTFQGLKFSDTDLLDFGQCVDQNRQQQFAFLFGVDEQLLSALVMGATGAVGSTYNYLGKKTNQMLEAFERKDFSLALNYQFCIQRFINFVVKLGFGVSQTKAIMTLVSGISMGPPRLPLQKASREFTDSAEAKLKSLDFLSFTDLKDGNLEAGS</sequence>
<keyword id="KW-0025">Alternative splicing</keyword>
<keyword id="KW-0119">Carbohydrate metabolism</keyword>
<keyword id="KW-0963">Cytoplasm</keyword>
<keyword id="KW-0456">Lyase</keyword>
<keyword id="KW-1185">Reference proteome</keyword>
<keyword id="KW-0704">Schiff base</keyword>
<feature type="chain" id="PRO_0000273355" description="N-acetylneuraminate lyase">
    <location>
        <begin position="1"/>
        <end position="320"/>
    </location>
</feature>
<feature type="active site" description="Proton donor" evidence="2">
    <location>
        <position position="143"/>
    </location>
</feature>
<feature type="active site" description="Schiff-base intermediate with substrate" evidence="2">
    <location>
        <position position="173"/>
    </location>
</feature>
<feature type="binding site" evidence="2">
    <location>
        <position position="51"/>
    </location>
    <ligand>
        <name>aceneuramate</name>
        <dbReference type="ChEBI" id="CHEBI:173083"/>
    </ligand>
</feature>
<feature type="binding site" evidence="2">
    <location>
        <position position="52"/>
    </location>
    <ligand>
        <name>aceneuramate</name>
        <dbReference type="ChEBI" id="CHEBI:173083"/>
    </ligand>
</feature>
<feature type="binding site" evidence="2">
    <location>
        <position position="175"/>
    </location>
    <ligand>
        <name>aceneuramate</name>
        <dbReference type="ChEBI" id="CHEBI:173083"/>
    </ligand>
</feature>
<feature type="binding site" evidence="2">
    <location>
        <position position="199"/>
    </location>
    <ligand>
        <name>aceneuramate</name>
        <dbReference type="ChEBI" id="CHEBI:173083"/>
    </ligand>
</feature>
<feature type="binding site" evidence="2">
    <location>
        <position position="201"/>
    </location>
    <ligand>
        <name>aceneuramate</name>
        <dbReference type="ChEBI" id="CHEBI:173083"/>
    </ligand>
</feature>
<feature type="binding site" evidence="2">
    <location>
        <position position="202"/>
    </location>
    <ligand>
        <name>aceneuramate</name>
        <dbReference type="ChEBI" id="CHEBI:173083"/>
    </ligand>
</feature>
<feature type="binding site" evidence="2">
    <location>
        <position position="218"/>
    </location>
    <ligand>
        <name>aceneuramate</name>
        <dbReference type="ChEBI" id="CHEBI:173083"/>
    </ligand>
</feature>
<feature type="splice variant" id="VSP_022523" description="In isoform 2." evidence="4">
    <original>MAFPKKKLQGLVAATITPMTEDGEINFSVIGQYVDYLVKEQGVKNIFVNGTTGEGLSLSISERRQVAEEWVTKGKDK</original>
    <variation>MSRAPGILAAWRRAPSLSVQKGSQTARHTCHPEVPLGNCFLPVYKANPLTVTRPWAER</variation>
    <location>
        <begin position="1"/>
        <end position="77"/>
    </location>
</feature>
<feature type="sequence conflict" description="In Ref. 1; CAH89553." evidence="5" ref="1">
    <original>K</original>
    <variation>N</variation>
    <location>
        <position position="117"/>
    </location>
</feature>
<evidence type="ECO:0000250" key="1"/>
<evidence type="ECO:0000250" key="2">
    <source>
        <dbReference type="UniProtKB" id="P0A6L4"/>
    </source>
</evidence>
<evidence type="ECO:0000250" key="3">
    <source>
        <dbReference type="UniProtKB" id="Q9BXD5"/>
    </source>
</evidence>
<evidence type="ECO:0000303" key="4">
    <source ref="1"/>
</evidence>
<evidence type="ECO:0000305" key="5"/>
<proteinExistence type="evidence at transcript level"/>
<organism>
    <name type="scientific">Pongo abelii</name>
    <name type="common">Sumatran orangutan</name>
    <name type="synonym">Pongo pygmaeus abelii</name>
    <dbReference type="NCBI Taxonomy" id="9601"/>
    <lineage>
        <taxon>Eukaryota</taxon>
        <taxon>Metazoa</taxon>
        <taxon>Chordata</taxon>
        <taxon>Craniata</taxon>
        <taxon>Vertebrata</taxon>
        <taxon>Euteleostomi</taxon>
        <taxon>Mammalia</taxon>
        <taxon>Eutheria</taxon>
        <taxon>Euarchontoglires</taxon>
        <taxon>Primates</taxon>
        <taxon>Haplorrhini</taxon>
        <taxon>Catarrhini</taxon>
        <taxon>Hominidae</taxon>
        <taxon>Pongo</taxon>
    </lineage>
</organism>
<dbReference type="EC" id="4.1.3.3" evidence="3"/>
<dbReference type="EMBL" id="CR857257">
    <property type="protein sequence ID" value="CAH89553.1"/>
    <property type="molecule type" value="mRNA"/>
</dbReference>
<dbReference type="EMBL" id="CR857761">
    <property type="protein sequence ID" value="CAH90026.1"/>
    <property type="molecule type" value="mRNA"/>
</dbReference>
<dbReference type="RefSeq" id="NP_001124676.1">
    <property type="nucleotide sequence ID" value="NM_001131204.2"/>
</dbReference>
<dbReference type="RefSeq" id="XP_009238498.2">
    <molecule id="Q5RDY1-1"/>
    <property type="nucleotide sequence ID" value="XM_009240223.4"/>
</dbReference>
<dbReference type="RefSeq" id="XP_009238503.2">
    <molecule id="Q5RDY1-1"/>
    <property type="nucleotide sequence ID" value="XM_009240228.4"/>
</dbReference>
<dbReference type="RefSeq" id="XP_024102097.2">
    <molecule id="Q5RDY1-1"/>
    <property type="nucleotide sequence ID" value="XM_024246329.3"/>
</dbReference>
<dbReference type="RefSeq" id="XP_054407171.1">
    <molecule id="Q5RDY1-1"/>
    <property type="nucleotide sequence ID" value="XM_054551196.2"/>
</dbReference>
<dbReference type="RefSeq" id="XP_054409105.1">
    <molecule id="Q5RDY1-2"/>
    <property type="nucleotide sequence ID" value="XM_054553130.1"/>
</dbReference>
<dbReference type="RefSeq" id="XP_054409424.1">
    <molecule id="Q5RDY1-2"/>
    <property type="nucleotide sequence ID" value="XM_054553449.2"/>
</dbReference>
<dbReference type="RefSeq" id="XP_054409701.1">
    <molecule id="Q5RDY1-2"/>
    <property type="nucleotide sequence ID" value="XM_054553726.2"/>
</dbReference>
<dbReference type="RefSeq" id="XP_054410099.1">
    <molecule id="Q5RDY1-2"/>
    <property type="nucleotide sequence ID" value="XM_054554124.1"/>
</dbReference>
<dbReference type="RefSeq" id="XP_054410555.1">
    <molecule id="Q5RDY1-2"/>
    <property type="nucleotide sequence ID" value="XM_054554580.2"/>
</dbReference>
<dbReference type="RefSeq" id="XP_054410939.1">
    <molecule id="Q5RDY1-2"/>
    <property type="nucleotide sequence ID" value="XM_054554964.2"/>
</dbReference>
<dbReference type="SMR" id="Q5RDY1"/>
<dbReference type="FunCoup" id="Q5RDY1">
    <property type="interactions" value="602"/>
</dbReference>
<dbReference type="STRING" id="9601.ENSPPYP00000000491"/>
<dbReference type="Ensembl" id="ENSPPYT00000055971.1">
    <molecule id="Q5RDY1-2"/>
    <property type="protein sequence ID" value="ENSPPYP00000034792.1"/>
    <property type="gene ID" value="ENSPPYG00000000432.3"/>
</dbReference>
<dbReference type="GeneID" id="100171523"/>
<dbReference type="KEGG" id="pon:100171523"/>
<dbReference type="CTD" id="80896"/>
<dbReference type="eggNOG" id="ENOG502QQA3">
    <property type="taxonomic scope" value="Eukaryota"/>
</dbReference>
<dbReference type="GeneTree" id="ENSGT00530000063604"/>
<dbReference type="InParanoid" id="Q5RDY1"/>
<dbReference type="OrthoDB" id="191315at2759"/>
<dbReference type="UniPathway" id="UPA00629"/>
<dbReference type="Proteomes" id="UP000001595">
    <property type="component" value="Chromosome 1"/>
</dbReference>
<dbReference type="GO" id="GO:0005737">
    <property type="term" value="C:cytoplasm"/>
    <property type="evidence" value="ECO:0007669"/>
    <property type="project" value="UniProtKB-SubCell"/>
</dbReference>
<dbReference type="GO" id="GO:0008747">
    <property type="term" value="F:N-acetylneuraminate lyase activity"/>
    <property type="evidence" value="ECO:0000250"/>
    <property type="project" value="UniProtKB"/>
</dbReference>
<dbReference type="GO" id="GO:0005975">
    <property type="term" value="P:carbohydrate metabolic process"/>
    <property type="evidence" value="ECO:0007669"/>
    <property type="project" value="InterPro"/>
</dbReference>
<dbReference type="GO" id="GO:0019262">
    <property type="term" value="P:N-acetylneuraminate catabolic process"/>
    <property type="evidence" value="ECO:0000250"/>
    <property type="project" value="UniProtKB"/>
</dbReference>
<dbReference type="CDD" id="cd00954">
    <property type="entry name" value="NAL"/>
    <property type="match status" value="1"/>
</dbReference>
<dbReference type="FunFam" id="3.20.20.70:FF:000133">
    <property type="entry name" value="N-acetylneuraminate pyruvate lyase"/>
    <property type="match status" value="1"/>
</dbReference>
<dbReference type="Gene3D" id="3.20.20.70">
    <property type="entry name" value="Aldolase class I"/>
    <property type="match status" value="1"/>
</dbReference>
<dbReference type="InterPro" id="IPR013785">
    <property type="entry name" value="Aldolase_TIM"/>
</dbReference>
<dbReference type="InterPro" id="IPR002220">
    <property type="entry name" value="DapA-like"/>
</dbReference>
<dbReference type="InterPro" id="IPR005264">
    <property type="entry name" value="NanA"/>
</dbReference>
<dbReference type="PANTHER" id="PTHR12128">
    <property type="entry name" value="DIHYDRODIPICOLINATE SYNTHASE"/>
    <property type="match status" value="1"/>
</dbReference>
<dbReference type="PANTHER" id="PTHR12128:SF21">
    <property type="entry name" value="N-ACETYLNEURAMINATE LYASE"/>
    <property type="match status" value="1"/>
</dbReference>
<dbReference type="Pfam" id="PF00701">
    <property type="entry name" value="DHDPS"/>
    <property type="match status" value="1"/>
</dbReference>
<dbReference type="PIRSF" id="PIRSF001365">
    <property type="entry name" value="DHDPS"/>
    <property type="match status" value="1"/>
</dbReference>
<dbReference type="PRINTS" id="PR00146">
    <property type="entry name" value="DHPICSNTHASE"/>
</dbReference>
<dbReference type="SMART" id="SM01130">
    <property type="entry name" value="DHDPS"/>
    <property type="match status" value="1"/>
</dbReference>
<dbReference type="SUPFAM" id="SSF51569">
    <property type="entry name" value="Aldolase"/>
    <property type="match status" value="1"/>
</dbReference>